<comment type="function">
    <text evidence="1">Myoactive.</text>
</comment>
<comment type="subcellular location">
    <subcellularLocation>
        <location evidence="6">Secreted</location>
    </subcellularLocation>
</comment>
<comment type="similarity">
    <text evidence="2">Belongs to the pyrokinin family.</text>
</comment>
<organism>
    <name type="scientific">Hemilobophasma montaguense</name>
    <name type="common">Gladiator</name>
    <name type="synonym">Heel-walker</name>
    <dbReference type="NCBI Taxonomy" id="253130"/>
    <lineage>
        <taxon>Eukaryota</taxon>
        <taxon>Metazoa</taxon>
        <taxon>Ecdysozoa</taxon>
        <taxon>Arthropoda</taxon>
        <taxon>Hexapoda</taxon>
        <taxon>Insecta</taxon>
        <taxon>Pterygota</taxon>
        <taxon>Neoptera</taxon>
        <taxon>Polyneoptera</taxon>
        <taxon>Mantophasmatodea</taxon>
        <taxon>Austrophasmatidae</taxon>
        <taxon>Hemilobophasma</taxon>
    </lineage>
</organism>
<dbReference type="GO" id="GO:0005576">
    <property type="term" value="C:extracellular region"/>
    <property type="evidence" value="ECO:0007669"/>
    <property type="project" value="UniProtKB-SubCell"/>
</dbReference>
<dbReference type="GO" id="GO:0005184">
    <property type="term" value="F:neuropeptide hormone activity"/>
    <property type="evidence" value="ECO:0007669"/>
    <property type="project" value="InterPro"/>
</dbReference>
<dbReference type="GO" id="GO:0007218">
    <property type="term" value="P:neuropeptide signaling pathway"/>
    <property type="evidence" value="ECO:0007669"/>
    <property type="project" value="UniProtKB-KW"/>
</dbReference>
<dbReference type="InterPro" id="IPR001484">
    <property type="entry name" value="Pyrokinin_CS"/>
</dbReference>
<dbReference type="PROSITE" id="PS00539">
    <property type="entry name" value="PYROKININ"/>
    <property type="match status" value="1"/>
</dbReference>
<protein>
    <recommendedName>
        <fullName evidence="4">CAPA-Pyrokinin</fullName>
        <shortName evidence="4">CAPA-PK</shortName>
    </recommendedName>
    <alternativeName>
        <fullName evidence="1">FXPRL-amide</fullName>
    </alternativeName>
</protein>
<name>PPK4_HEMMO</name>
<feature type="peptide" id="PRO_0000421603" description="CAPA-Pyrokinin" evidence="3">
    <location>
        <begin position="1"/>
        <end position="15"/>
    </location>
</feature>
<feature type="modified residue" description="Leucine amide" evidence="3">
    <location>
        <position position="15"/>
    </location>
</feature>
<sequence length="15" mass="1481">SGGGDGSGMWFGPRL</sequence>
<evidence type="ECO:0000250" key="1">
    <source>
        <dbReference type="UniProtKB" id="P82617"/>
    </source>
</evidence>
<evidence type="ECO:0000255" key="2"/>
<evidence type="ECO:0000269" key="3">
    <source>
    </source>
</evidence>
<evidence type="ECO:0000303" key="4">
    <source>
    </source>
</evidence>
<evidence type="ECO:0000305" key="5"/>
<evidence type="ECO:0000305" key="6">
    <source>
    </source>
</evidence>
<reference evidence="5" key="1">
    <citation type="journal article" date="2012" name="Syst. Biol.">
        <title>Peptidomics-based phylogeny and biogeography of Mantophasmatodea (Hexapoda).</title>
        <authorList>
            <person name="Predel R."/>
            <person name="Neupert S."/>
            <person name="Huetteroth W."/>
            <person name="Kahnt J."/>
            <person name="Waidelich D."/>
            <person name="Roth S."/>
        </authorList>
    </citation>
    <scope>PROTEIN SEQUENCE</scope>
    <scope>AMIDATION AT LEU-15</scope>
    <source>
        <tissue evidence="3">Abdominal perisympathetic organs</tissue>
    </source>
</reference>
<keyword id="KW-0027">Amidation</keyword>
<keyword id="KW-0903">Direct protein sequencing</keyword>
<keyword id="KW-0527">Neuropeptide</keyword>
<keyword id="KW-0964">Secreted</keyword>
<accession>B3A0B8</accession>
<proteinExistence type="evidence at protein level"/>